<sequence length="294" mass="31728">MTQDYIVKALAFDGDIRAYAAVTTNAVQEAQTRHYTWPTASAALGRTMTATAMMGAMLKGDQKLTVTVDGHGPIGRIVADADAKGDIRGYVTNPQTHFPLNDQGKLDVRRAVGTDGTLTVVKDVGLKDYFSGSSPIVSGELGDDFTYYYATSEQVPSSVGLGVLVNPDNSIKAAGGFIIQVMPNAKEETIDKVEKAIGNMTPVSKLIDQGLSPEELLTEILGKENVKFLETVPVKFECNCSHEKFLNAIKGLGEAEIQAMIDEDHGAEAECHFCRAKYQYSEAELKGLIEELNA</sequence>
<dbReference type="EMBL" id="AM295250">
    <property type="protein sequence ID" value="CAL27076.1"/>
    <property type="molecule type" value="Genomic_DNA"/>
</dbReference>
<dbReference type="RefSeq" id="WP_012664191.1">
    <property type="nucleotide sequence ID" value="NC_012121.1"/>
</dbReference>
<dbReference type="SMR" id="B9DLC1"/>
<dbReference type="GeneID" id="93795076"/>
<dbReference type="KEGG" id="sca:SCA_0163"/>
<dbReference type="eggNOG" id="COG1281">
    <property type="taxonomic scope" value="Bacteria"/>
</dbReference>
<dbReference type="HOGENOM" id="CLU_054493_1_0_9"/>
<dbReference type="OrthoDB" id="9776534at2"/>
<dbReference type="BioCyc" id="SCAR396513:SCA_RS00790-MONOMER"/>
<dbReference type="Proteomes" id="UP000000444">
    <property type="component" value="Chromosome"/>
</dbReference>
<dbReference type="GO" id="GO:0005737">
    <property type="term" value="C:cytoplasm"/>
    <property type="evidence" value="ECO:0007669"/>
    <property type="project" value="UniProtKB-SubCell"/>
</dbReference>
<dbReference type="GO" id="GO:0044183">
    <property type="term" value="F:protein folding chaperone"/>
    <property type="evidence" value="ECO:0007669"/>
    <property type="project" value="TreeGrafter"/>
</dbReference>
<dbReference type="GO" id="GO:0051082">
    <property type="term" value="F:unfolded protein binding"/>
    <property type="evidence" value="ECO:0007669"/>
    <property type="project" value="UniProtKB-UniRule"/>
</dbReference>
<dbReference type="GO" id="GO:0042026">
    <property type="term" value="P:protein refolding"/>
    <property type="evidence" value="ECO:0007669"/>
    <property type="project" value="TreeGrafter"/>
</dbReference>
<dbReference type="CDD" id="cd00498">
    <property type="entry name" value="Hsp33"/>
    <property type="match status" value="1"/>
</dbReference>
<dbReference type="Gene3D" id="3.55.30.10">
    <property type="entry name" value="Hsp33 domain"/>
    <property type="match status" value="1"/>
</dbReference>
<dbReference type="Gene3D" id="3.90.1280.10">
    <property type="entry name" value="HSP33 redox switch-like"/>
    <property type="match status" value="1"/>
</dbReference>
<dbReference type="HAMAP" id="MF_00117">
    <property type="entry name" value="HslO"/>
    <property type="match status" value="1"/>
</dbReference>
<dbReference type="InterPro" id="IPR000397">
    <property type="entry name" value="Heat_shock_Hsp33"/>
</dbReference>
<dbReference type="InterPro" id="IPR016154">
    <property type="entry name" value="Heat_shock_Hsp33_C"/>
</dbReference>
<dbReference type="InterPro" id="IPR016153">
    <property type="entry name" value="Heat_shock_Hsp33_N"/>
</dbReference>
<dbReference type="NCBIfam" id="NF001033">
    <property type="entry name" value="PRK00114.1"/>
    <property type="match status" value="1"/>
</dbReference>
<dbReference type="PANTHER" id="PTHR30111">
    <property type="entry name" value="33 KDA CHAPERONIN"/>
    <property type="match status" value="1"/>
</dbReference>
<dbReference type="PANTHER" id="PTHR30111:SF1">
    <property type="entry name" value="33 KDA CHAPERONIN"/>
    <property type="match status" value="1"/>
</dbReference>
<dbReference type="Pfam" id="PF01430">
    <property type="entry name" value="HSP33"/>
    <property type="match status" value="1"/>
</dbReference>
<dbReference type="PIRSF" id="PIRSF005261">
    <property type="entry name" value="Heat_shock_Hsp33"/>
    <property type="match status" value="1"/>
</dbReference>
<dbReference type="SUPFAM" id="SSF64397">
    <property type="entry name" value="Hsp33 domain"/>
    <property type="match status" value="1"/>
</dbReference>
<dbReference type="SUPFAM" id="SSF118352">
    <property type="entry name" value="HSP33 redox switch-like"/>
    <property type="match status" value="1"/>
</dbReference>
<evidence type="ECO:0000255" key="1">
    <source>
        <dbReference type="HAMAP-Rule" id="MF_00117"/>
    </source>
</evidence>
<feature type="chain" id="PRO_1000119263" description="33 kDa chaperonin">
    <location>
        <begin position="1"/>
        <end position="294"/>
    </location>
</feature>
<feature type="disulfide bond" description="Redox-active" evidence="1">
    <location>
        <begin position="238"/>
        <end position="240"/>
    </location>
</feature>
<feature type="disulfide bond" description="Redox-active" evidence="1">
    <location>
        <begin position="271"/>
        <end position="274"/>
    </location>
</feature>
<comment type="function">
    <text evidence="1">Redox regulated molecular chaperone. Protects both thermally unfolding and oxidatively damaged proteins from irreversible aggregation. Plays an important role in the bacterial defense system toward oxidative stress.</text>
</comment>
<comment type="subcellular location">
    <subcellularLocation>
        <location evidence="1">Cytoplasm</location>
    </subcellularLocation>
</comment>
<comment type="PTM">
    <text evidence="1">Under oxidizing conditions two disulfide bonds are formed involving the reactive cysteines. Under reducing conditions zinc is bound to the reactive cysteines and the protein is inactive.</text>
</comment>
<comment type="similarity">
    <text evidence="1">Belongs to the HSP33 family.</text>
</comment>
<keyword id="KW-0143">Chaperone</keyword>
<keyword id="KW-0963">Cytoplasm</keyword>
<keyword id="KW-1015">Disulfide bond</keyword>
<keyword id="KW-0676">Redox-active center</keyword>
<keyword id="KW-1185">Reference proteome</keyword>
<keyword id="KW-0862">Zinc</keyword>
<gene>
    <name evidence="1" type="primary">hslO</name>
    <name type="ordered locus">Sca_0163</name>
</gene>
<accession>B9DLC1</accession>
<name>HSLO_STACT</name>
<organism>
    <name type="scientific">Staphylococcus carnosus (strain TM300)</name>
    <dbReference type="NCBI Taxonomy" id="396513"/>
    <lineage>
        <taxon>Bacteria</taxon>
        <taxon>Bacillati</taxon>
        <taxon>Bacillota</taxon>
        <taxon>Bacilli</taxon>
        <taxon>Bacillales</taxon>
        <taxon>Staphylococcaceae</taxon>
        <taxon>Staphylococcus</taxon>
    </lineage>
</organism>
<reference key="1">
    <citation type="journal article" date="2009" name="Appl. Environ. Microbiol.">
        <title>Genome analysis of the meat starter culture bacterium Staphylococcus carnosus TM300.</title>
        <authorList>
            <person name="Rosenstein R."/>
            <person name="Nerz C."/>
            <person name="Biswas L."/>
            <person name="Resch A."/>
            <person name="Raddatz G."/>
            <person name="Schuster S.C."/>
            <person name="Goetz F."/>
        </authorList>
    </citation>
    <scope>NUCLEOTIDE SEQUENCE [LARGE SCALE GENOMIC DNA]</scope>
    <source>
        <strain>TM300</strain>
    </source>
</reference>
<protein>
    <recommendedName>
        <fullName evidence="1">33 kDa chaperonin</fullName>
    </recommendedName>
    <alternativeName>
        <fullName evidence="1">Heat shock protein 33 homolog</fullName>
        <shortName evidence="1">HSP33</shortName>
    </alternativeName>
</protein>
<proteinExistence type="inferred from homology"/>